<name>PSD_GLUDA</name>
<protein>
    <recommendedName>
        <fullName evidence="1">Phosphatidylserine decarboxylase proenzyme</fullName>
        <ecNumber evidence="1">4.1.1.65</ecNumber>
    </recommendedName>
    <component>
        <recommendedName>
            <fullName evidence="1">Phosphatidylserine decarboxylase alpha chain</fullName>
        </recommendedName>
    </component>
    <component>
        <recommendedName>
            <fullName evidence="1">Phosphatidylserine decarboxylase beta chain</fullName>
        </recommendedName>
    </component>
</protein>
<proteinExistence type="inferred from homology"/>
<feature type="chain" id="PRO_1000082924" description="Phosphatidylserine decarboxylase beta chain" evidence="1">
    <location>
        <begin position="1"/>
        <end position="194"/>
    </location>
</feature>
<feature type="chain" id="PRO_1000082925" description="Phosphatidylserine decarboxylase alpha chain" evidence="1">
    <location>
        <begin position="195"/>
        <end position="225"/>
    </location>
</feature>
<feature type="active site" description="Schiff-base intermediate with substrate; via pyruvic acid" evidence="1">
    <location>
        <position position="195"/>
    </location>
</feature>
<feature type="site" description="Cleavage (non-hydrolytic); by autocatalysis" evidence="1">
    <location>
        <begin position="194"/>
        <end position="195"/>
    </location>
</feature>
<feature type="modified residue" description="Pyruvic acid (Ser); by autocatalysis" evidence="1">
    <location>
        <position position="195"/>
    </location>
</feature>
<comment type="function">
    <text evidence="1">Catalyzes the formation of phosphatidylethanolamine (PtdEtn) from phosphatidylserine (PtdSer).</text>
</comment>
<comment type="catalytic activity">
    <reaction evidence="1">
        <text>a 1,2-diacyl-sn-glycero-3-phospho-L-serine + H(+) = a 1,2-diacyl-sn-glycero-3-phosphoethanolamine + CO2</text>
        <dbReference type="Rhea" id="RHEA:20828"/>
        <dbReference type="ChEBI" id="CHEBI:15378"/>
        <dbReference type="ChEBI" id="CHEBI:16526"/>
        <dbReference type="ChEBI" id="CHEBI:57262"/>
        <dbReference type="ChEBI" id="CHEBI:64612"/>
        <dbReference type="EC" id="4.1.1.65"/>
    </reaction>
</comment>
<comment type="cofactor">
    <cofactor evidence="1">
        <name>pyruvate</name>
        <dbReference type="ChEBI" id="CHEBI:15361"/>
    </cofactor>
    <text evidence="1">Binds 1 pyruvoyl group covalently per subunit.</text>
</comment>
<comment type="pathway">
    <text evidence="1">Phospholipid metabolism; phosphatidylethanolamine biosynthesis; phosphatidylethanolamine from CDP-diacylglycerol: step 2/2.</text>
</comment>
<comment type="subunit">
    <text evidence="1">Heterodimer of a large membrane-associated beta subunit and a small pyruvoyl-containing alpha subunit.</text>
</comment>
<comment type="subcellular location">
    <subcellularLocation>
        <location evidence="1">Cell membrane</location>
        <topology evidence="1">Peripheral membrane protein</topology>
    </subcellularLocation>
</comment>
<comment type="PTM">
    <text evidence="1">Is synthesized initially as an inactive proenzyme. Formation of the active enzyme involves a self-maturation process in which the active site pyruvoyl group is generated from an internal serine residue via an autocatalytic post-translational modification. Two non-identical subunits are generated from the proenzyme in this reaction, and the pyruvate is formed at the N-terminus of the alpha chain, which is derived from the carboxyl end of the proenzyme. The post-translation cleavage follows an unusual pathway, termed non-hydrolytic serinolysis, in which the side chain hydroxyl group of the serine supplies its oxygen atom to form the C-terminus of the beta chain, while the remainder of the serine residue undergoes an oxidative deamination to produce ammonia and the pyruvoyl prosthetic group on the alpha chain.</text>
</comment>
<comment type="similarity">
    <text evidence="1">Belongs to the phosphatidylserine decarboxylase family. PSD-A subfamily.</text>
</comment>
<keyword id="KW-1003">Cell membrane</keyword>
<keyword id="KW-0210">Decarboxylase</keyword>
<keyword id="KW-0444">Lipid biosynthesis</keyword>
<keyword id="KW-0443">Lipid metabolism</keyword>
<keyword id="KW-0456">Lyase</keyword>
<keyword id="KW-0472">Membrane</keyword>
<keyword id="KW-0594">Phospholipid biosynthesis</keyword>
<keyword id="KW-1208">Phospholipid metabolism</keyword>
<keyword id="KW-0670">Pyruvate</keyword>
<keyword id="KW-1185">Reference proteome</keyword>
<keyword id="KW-0865">Zymogen</keyword>
<accession>A9H1G5</accession>
<accession>B5ZJ02</accession>
<organism>
    <name type="scientific">Gluconacetobacter diazotrophicus (strain ATCC 49037 / DSM 5601 / CCUG 37298 / CIP 103539 / LMG 7603 / PAl5)</name>
    <dbReference type="NCBI Taxonomy" id="272568"/>
    <lineage>
        <taxon>Bacteria</taxon>
        <taxon>Pseudomonadati</taxon>
        <taxon>Pseudomonadota</taxon>
        <taxon>Alphaproteobacteria</taxon>
        <taxon>Acetobacterales</taxon>
        <taxon>Acetobacteraceae</taxon>
        <taxon>Gluconacetobacter</taxon>
    </lineage>
</organism>
<reference key="1">
    <citation type="journal article" date="2009" name="BMC Genomics">
        <title>Complete genome sequence of the sugarcane nitrogen-fixing endophyte Gluconacetobacter diazotrophicus Pal5.</title>
        <authorList>
            <person name="Bertalan M."/>
            <person name="Albano R."/>
            <person name="de Padua V."/>
            <person name="Rouws L."/>
            <person name="Rojas C."/>
            <person name="Hemerly A."/>
            <person name="Teixeira K."/>
            <person name="Schwab S."/>
            <person name="Araujo J."/>
            <person name="Oliveira A."/>
            <person name="Franca L."/>
            <person name="Magalhaes V."/>
            <person name="Alqueres S."/>
            <person name="Cardoso A."/>
            <person name="Almeida W."/>
            <person name="Loureiro M.M."/>
            <person name="Nogueira E."/>
            <person name="Cidade D."/>
            <person name="Oliveira D."/>
            <person name="Simao T."/>
            <person name="Macedo J."/>
            <person name="Valadao A."/>
            <person name="Dreschsel M."/>
            <person name="Freitas F."/>
            <person name="Vidal M."/>
            <person name="Guedes H."/>
            <person name="Rodrigues E."/>
            <person name="Meneses C."/>
            <person name="Brioso P."/>
            <person name="Pozzer L."/>
            <person name="Figueiredo D."/>
            <person name="Montano H."/>
            <person name="Junior J."/>
            <person name="de Souza Filho G."/>
            <person name="Martin Quintana Flores V."/>
            <person name="Ferreira B."/>
            <person name="Branco A."/>
            <person name="Gonzalez P."/>
            <person name="Guillobel H."/>
            <person name="Lemos M."/>
            <person name="Seibel L."/>
            <person name="Macedo J."/>
            <person name="Alves-Ferreira M."/>
            <person name="Sachetto-Martins G."/>
            <person name="Coelho A."/>
            <person name="Santos E."/>
            <person name="Amaral G."/>
            <person name="Neves A."/>
            <person name="Pacheco A.B."/>
            <person name="Carvalho D."/>
            <person name="Lery L."/>
            <person name="Bisch P."/>
            <person name="Rossle S.C."/>
            <person name="Urmenyi T."/>
            <person name="Rael Pereira A."/>
            <person name="Silva R."/>
            <person name="Rondinelli E."/>
            <person name="von Kruger W."/>
            <person name="Martins O."/>
            <person name="Baldani J.I."/>
            <person name="Ferreira P.C."/>
        </authorList>
    </citation>
    <scope>NUCLEOTIDE SEQUENCE [LARGE SCALE GENOMIC DNA]</scope>
    <source>
        <strain>ATCC 49037 / DSM 5601 / CCUG 37298 / CIP 103539 / LMG 7603 / PAl5</strain>
    </source>
</reference>
<reference key="2">
    <citation type="journal article" date="2010" name="Stand. Genomic Sci.">
        <title>Two genome sequences of the same bacterial strain, Gluconacetobacter diazotrophicus PAl 5, suggest a new standard in genome sequence submission.</title>
        <authorList>
            <person name="Giongo A."/>
            <person name="Tyler H.L."/>
            <person name="Zipperer U.N."/>
            <person name="Triplett E.W."/>
        </authorList>
    </citation>
    <scope>NUCLEOTIDE SEQUENCE [LARGE SCALE GENOMIC DNA]</scope>
    <source>
        <strain>ATCC 49037 / DSM 5601 / CCUG 37298 / CIP 103539 / LMG 7603 / PAl5</strain>
    </source>
</reference>
<sequence>MSLIQSLKLVLARPHPAARPFLLASGAAALAGRALPWRPARWLGTASGLFFGFCLYFFRDPERVPPVDTHLALAPADGHVVSVEKVVPPDSLDMGDVPVWRVATFLSVLDVHVNRMPAAGTVTRVAYHPGQFLNASLDKASELNERNALRLTLPDGRNMAVVQIAGLIARRILCDAEEGMTYEAGERFGLIRFGSRTDLYLPPGVEPLVTVGQTMVGGETVMARL</sequence>
<dbReference type="EC" id="4.1.1.65" evidence="1"/>
<dbReference type="EMBL" id="AM889285">
    <property type="protein sequence ID" value="CAP57251.1"/>
    <property type="molecule type" value="Genomic_DNA"/>
</dbReference>
<dbReference type="EMBL" id="CP001189">
    <property type="protein sequence ID" value="ACI52792.1"/>
    <property type="molecule type" value="Genomic_DNA"/>
</dbReference>
<dbReference type="RefSeq" id="WP_012227791.1">
    <property type="nucleotide sequence ID" value="NC_010125.1"/>
</dbReference>
<dbReference type="STRING" id="272568.GDI3308"/>
<dbReference type="KEGG" id="gdi:GDI3308"/>
<dbReference type="KEGG" id="gdj:Gdia_3062"/>
<dbReference type="eggNOG" id="COG0688">
    <property type="taxonomic scope" value="Bacteria"/>
</dbReference>
<dbReference type="HOGENOM" id="CLU_072492_0_0_5"/>
<dbReference type="OrthoDB" id="9790893at2"/>
<dbReference type="UniPathway" id="UPA00558">
    <property type="reaction ID" value="UER00616"/>
</dbReference>
<dbReference type="Proteomes" id="UP000001176">
    <property type="component" value="Chromosome"/>
</dbReference>
<dbReference type="GO" id="GO:0005886">
    <property type="term" value="C:plasma membrane"/>
    <property type="evidence" value="ECO:0007669"/>
    <property type="project" value="UniProtKB-SubCell"/>
</dbReference>
<dbReference type="GO" id="GO:0004609">
    <property type="term" value="F:phosphatidylserine decarboxylase activity"/>
    <property type="evidence" value="ECO:0007669"/>
    <property type="project" value="UniProtKB-UniRule"/>
</dbReference>
<dbReference type="GO" id="GO:0006646">
    <property type="term" value="P:phosphatidylethanolamine biosynthetic process"/>
    <property type="evidence" value="ECO:0007669"/>
    <property type="project" value="UniProtKB-UniRule"/>
</dbReference>
<dbReference type="HAMAP" id="MF_00664">
    <property type="entry name" value="PS_decarb_PSD_A"/>
    <property type="match status" value="1"/>
</dbReference>
<dbReference type="InterPro" id="IPR003817">
    <property type="entry name" value="PS_Dcarbxylase"/>
</dbReference>
<dbReference type="InterPro" id="IPR033175">
    <property type="entry name" value="PSD-A"/>
</dbReference>
<dbReference type="NCBIfam" id="NF003679">
    <property type="entry name" value="PRK05305.1-3"/>
    <property type="match status" value="1"/>
</dbReference>
<dbReference type="PANTHER" id="PTHR35809">
    <property type="entry name" value="ARCHAETIDYLSERINE DECARBOXYLASE PROENZYME-RELATED"/>
    <property type="match status" value="1"/>
</dbReference>
<dbReference type="PANTHER" id="PTHR35809:SF1">
    <property type="entry name" value="ARCHAETIDYLSERINE DECARBOXYLASE PROENZYME-RELATED"/>
    <property type="match status" value="1"/>
</dbReference>
<dbReference type="Pfam" id="PF02666">
    <property type="entry name" value="PS_Dcarbxylase"/>
    <property type="match status" value="1"/>
</dbReference>
<evidence type="ECO:0000255" key="1">
    <source>
        <dbReference type="HAMAP-Rule" id="MF_00664"/>
    </source>
</evidence>
<gene>
    <name evidence="1" type="primary">psd</name>
    <name type="ordered locus">GDI3308</name>
    <name type="ordered locus">Gdia_3062</name>
</gene>